<gene>
    <name evidence="1" type="primary">psbN</name>
    <name type="ordered locus">MoinCp049</name>
</gene>
<evidence type="ECO:0000255" key="1">
    <source>
        <dbReference type="HAMAP-Rule" id="MF_00293"/>
    </source>
</evidence>
<keyword id="KW-0150">Chloroplast</keyword>
<keyword id="KW-0472">Membrane</keyword>
<keyword id="KW-0934">Plastid</keyword>
<keyword id="KW-0793">Thylakoid</keyword>
<keyword id="KW-0812">Transmembrane</keyword>
<keyword id="KW-1133">Transmembrane helix</keyword>
<sequence length="43" mass="4722">METATLVAIFISGLLVSFTGYALYTAFGQPSQQLRDPFEEHGD</sequence>
<proteinExistence type="inferred from homology"/>
<organism>
    <name type="scientific">Morus indica</name>
    <name type="common">Mulberry</name>
    <dbReference type="NCBI Taxonomy" id="248361"/>
    <lineage>
        <taxon>Eukaryota</taxon>
        <taxon>Viridiplantae</taxon>
        <taxon>Streptophyta</taxon>
        <taxon>Embryophyta</taxon>
        <taxon>Tracheophyta</taxon>
        <taxon>Spermatophyta</taxon>
        <taxon>Magnoliopsida</taxon>
        <taxon>eudicotyledons</taxon>
        <taxon>Gunneridae</taxon>
        <taxon>Pentapetalae</taxon>
        <taxon>rosids</taxon>
        <taxon>fabids</taxon>
        <taxon>Rosales</taxon>
        <taxon>Moraceae</taxon>
        <taxon>Moreae</taxon>
        <taxon>Morus</taxon>
    </lineage>
</organism>
<comment type="function">
    <text evidence="1">May play a role in photosystem I and II biogenesis.</text>
</comment>
<comment type="subcellular location">
    <subcellularLocation>
        <location evidence="1">Plastid</location>
        <location evidence="1">Chloroplast thylakoid membrane</location>
        <topology evidence="1">Single-pass membrane protein</topology>
    </subcellularLocation>
</comment>
<comment type="similarity">
    <text evidence="1">Belongs to the PsbN family.</text>
</comment>
<comment type="caution">
    <text evidence="1">Originally thought to be a component of PSII; based on experiments in Synechocystis, N.tabacum and barley, and its absence from PSII in T.elongatus and T.vulcanus, this is probably not true.</text>
</comment>
<dbReference type="EMBL" id="DQ226511">
    <property type="protein sequence ID" value="ABB20985.1"/>
    <property type="molecule type" value="Genomic_DNA"/>
</dbReference>
<dbReference type="RefSeq" id="YP_762289.1">
    <property type="nucleotide sequence ID" value="NC_008359.1"/>
</dbReference>
<dbReference type="SMR" id="Q09WY9"/>
<dbReference type="GeneID" id="4290648"/>
<dbReference type="GO" id="GO:0009535">
    <property type="term" value="C:chloroplast thylakoid membrane"/>
    <property type="evidence" value="ECO:0007669"/>
    <property type="project" value="UniProtKB-SubCell"/>
</dbReference>
<dbReference type="GO" id="GO:0015979">
    <property type="term" value="P:photosynthesis"/>
    <property type="evidence" value="ECO:0007669"/>
    <property type="project" value="InterPro"/>
</dbReference>
<dbReference type="HAMAP" id="MF_00293">
    <property type="entry name" value="PSII_PsbN"/>
    <property type="match status" value="1"/>
</dbReference>
<dbReference type="InterPro" id="IPR003398">
    <property type="entry name" value="PSII_PsbN"/>
</dbReference>
<dbReference type="PANTHER" id="PTHR35326">
    <property type="entry name" value="PROTEIN PSBN"/>
    <property type="match status" value="1"/>
</dbReference>
<dbReference type="PANTHER" id="PTHR35326:SF3">
    <property type="entry name" value="PROTEIN PSBN"/>
    <property type="match status" value="1"/>
</dbReference>
<dbReference type="Pfam" id="PF02468">
    <property type="entry name" value="PsbN"/>
    <property type="match status" value="1"/>
</dbReference>
<reference key="1">
    <citation type="submission" date="2005-09" db="EMBL/GenBank/DDBJ databases">
        <title>The chloroplast genome of mulberry: structural features and comparative analysis.</title>
        <authorList>
            <person name="Ravi V."/>
            <person name="Khurana J.P."/>
            <person name="Tyagi A.K."/>
            <person name="Khurana P."/>
        </authorList>
    </citation>
    <scope>NUCLEOTIDE SEQUENCE [LARGE SCALE GENOMIC DNA]</scope>
    <source>
        <strain>cv. K2</strain>
    </source>
</reference>
<geneLocation type="chloroplast"/>
<name>PSBN_MORIN</name>
<accession>Q09WY9</accession>
<protein>
    <recommendedName>
        <fullName evidence="1">Protein PsbN</fullName>
    </recommendedName>
</protein>
<feature type="chain" id="PRO_0000276273" description="Protein PsbN">
    <location>
        <begin position="1"/>
        <end position="43"/>
    </location>
</feature>
<feature type="transmembrane region" description="Helical" evidence="1">
    <location>
        <begin position="7"/>
        <end position="27"/>
    </location>
</feature>